<reference key="1">
    <citation type="submission" date="1995-01" db="EMBL/GenBank/DDBJ databases">
        <authorList>
            <person name="Schaap P.J."/>
            <person name="Muller Y."/>
            <person name="Visser J."/>
        </authorList>
    </citation>
    <scope>NUCLEOTIDE SEQUENCE [GENOMIC DNA]</scope>
    <source>
        <strain>FGSC A4 / ATCC 38163 / CBS 112.46 / NRRL 194 / M139</strain>
    </source>
</reference>
<reference key="2">
    <citation type="submission" date="1996-09" db="EMBL/GenBank/DDBJ databases">
        <authorList>
            <person name="van den Broek P."/>
            <person name="Goosen T."/>
            <person name="Wennekes B."/>
            <person name="van den Broek H."/>
        </authorList>
    </citation>
    <scope>NUCLEOTIDE SEQUENCE [GENOMIC DNA]</scope>
    <source>
        <strain>WG096</strain>
    </source>
</reference>
<reference key="3">
    <citation type="journal article" date="2005" name="Nature">
        <title>Sequencing of Aspergillus nidulans and comparative analysis with A. fumigatus and A. oryzae.</title>
        <authorList>
            <person name="Galagan J.E."/>
            <person name="Calvo S.E."/>
            <person name="Cuomo C."/>
            <person name="Ma L.-J."/>
            <person name="Wortman J.R."/>
            <person name="Batzoglou S."/>
            <person name="Lee S.-I."/>
            <person name="Bastuerkmen M."/>
            <person name="Spevak C.C."/>
            <person name="Clutterbuck J."/>
            <person name="Kapitonov V."/>
            <person name="Jurka J."/>
            <person name="Scazzocchio C."/>
            <person name="Farman M.L."/>
            <person name="Butler J."/>
            <person name="Purcell S."/>
            <person name="Harris S."/>
            <person name="Braus G.H."/>
            <person name="Draht O."/>
            <person name="Busch S."/>
            <person name="D'Enfert C."/>
            <person name="Bouchier C."/>
            <person name="Goldman G.H."/>
            <person name="Bell-Pedersen D."/>
            <person name="Griffiths-Jones S."/>
            <person name="Doonan J.H."/>
            <person name="Yu J."/>
            <person name="Vienken K."/>
            <person name="Pain A."/>
            <person name="Freitag M."/>
            <person name="Selker E.U."/>
            <person name="Archer D.B."/>
            <person name="Penalva M.A."/>
            <person name="Oakley B.R."/>
            <person name="Momany M."/>
            <person name="Tanaka T."/>
            <person name="Kumagai T."/>
            <person name="Asai K."/>
            <person name="Machida M."/>
            <person name="Nierman W.C."/>
            <person name="Denning D.W."/>
            <person name="Caddick M.X."/>
            <person name="Hynes M."/>
            <person name="Paoletti M."/>
            <person name="Fischer R."/>
            <person name="Miller B.L."/>
            <person name="Dyer P.S."/>
            <person name="Sachs M.S."/>
            <person name="Osmani S.A."/>
            <person name="Birren B.W."/>
        </authorList>
    </citation>
    <scope>NUCLEOTIDE SEQUENCE [LARGE SCALE GENOMIC DNA]</scope>
    <source>
        <strain>FGSC A4 / ATCC 38163 / CBS 112.46 / NRRL 194 / M139</strain>
    </source>
</reference>
<reference key="4">
    <citation type="journal article" date="2009" name="Fungal Genet. Biol.">
        <title>The 2008 update of the Aspergillus nidulans genome annotation: a community effort.</title>
        <authorList>
            <person name="Wortman J.R."/>
            <person name="Gilsenan J.M."/>
            <person name="Joardar V."/>
            <person name="Deegan J."/>
            <person name="Clutterbuck J."/>
            <person name="Andersen M.R."/>
            <person name="Archer D."/>
            <person name="Bencina M."/>
            <person name="Braus G."/>
            <person name="Coutinho P."/>
            <person name="von Dohren H."/>
            <person name="Doonan J."/>
            <person name="Driessen A.J."/>
            <person name="Durek P."/>
            <person name="Espeso E."/>
            <person name="Fekete E."/>
            <person name="Flipphi M."/>
            <person name="Estrada C.G."/>
            <person name="Geysens S."/>
            <person name="Goldman G."/>
            <person name="de Groot P.W."/>
            <person name="Hansen K."/>
            <person name="Harris S.D."/>
            <person name="Heinekamp T."/>
            <person name="Helmstaedt K."/>
            <person name="Henrissat B."/>
            <person name="Hofmann G."/>
            <person name="Homan T."/>
            <person name="Horio T."/>
            <person name="Horiuchi H."/>
            <person name="James S."/>
            <person name="Jones M."/>
            <person name="Karaffa L."/>
            <person name="Karanyi Z."/>
            <person name="Kato M."/>
            <person name="Keller N."/>
            <person name="Kelly D.E."/>
            <person name="Kiel J.A."/>
            <person name="Kim J.M."/>
            <person name="van der Klei I.J."/>
            <person name="Klis F.M."/>
            <person name="Kovalchuk A."/>
            <person name="Krasevec N."/>
            <person name="Kubicek C.P."/>
            <person name="Liu B."/>
            <person name="Maccabe A."/>
            <person name="Meyer V."/>
            <person name="Mirabito P."/>
            <person name="Miskei M."/>
            <person name="Mos M."/>
            <person name="Mullins J."/>
            <person name="Nelson D.R."/>
            <person name="Nielsen J."/>
            <person name="Oakley B.R."/>
            <person name="Osmani S.A."/>
            <person name="Pakula T."/>
            <person name="Paszewski A."/>
            <person name="Paulsen I."/>
            <person name="Pilsyk S."/>
            <person name="Pocsi I."/>
            <person name="Punt P.J."/>
            <person name="Ram A.F."/>
            <person name="Ren Q."/>
            <person name="Robellet X."/>
            <person name="Robson G."/>
            <person name="Seiboth B."/>
            <person name="van Solingen P."/>
            <person name="Specht T."/>
            <person name="Sun J."/>
            <person name="Taheri-Talesh N."/>
            <person name="Takeshita N."/>
            <person name="Ussery D."/>
            <person name="vanKuyk P.A."/>
            <person name="Visser H."/>
            <person name="van de Vondervoort P.J."/>
            <person name="de Vries R.P."/>
            <person name="Walton J."/>
            <person name="Xiang X."/>
            <person name="Xiong Y."/>
            <person name="Zeng A.P."/>
            <person name="Brandt B.W."/>
            <person name="Cornell M.J."/>
            <person name="van den Hondel C.A."/>
            <person name="Visser J."/>
            <person name="Oliver S.G."/>
            <person name="Turner G."/>
        </authorList>
    </citation>
    <scope>GENOME REANNOTATION</scope>
    <source>
        <strain>FGSC A4 / ATCC 38163 / CBS 112.46 / NRRL 194 / M139</strain>
    </source>
</reference>
<accession>P41764</accession>
<accession>C8VIZ3</accession>
<accession>Q5B8Z9</accession>
<accession>Q92408</accession>
<gene>
    <name type="primary">gsdA</name>
    <name type="synonym">g6pD</name>
    <name type="ORF">AN2981</name>
</gene>
<comment type="function">
    <text evidence="2">Catalyzes the rate-limiting step of the oxidative pentose-phosphate pathway, which represents a route for the dissimilation of carbohydrates besides glycolysis. The main function of this enzyme is to provide reducing power (NADPH) and pentose phosphates for fatty acid and nucleic acid synthesis (By similarity).</text>
</comment>
<comment type="catalytic activity">
    <reaction evidence="2">
        <text>D-glucose 6-phosphate + NADP(+) = 6-phospho-D-glucono-1,5-lactone + NADPH + H(+)</text>
        <dbReference type="Rhea" id="RHEA:15841"/>
        <dbReference type="ChEBI" id="CHEBI:15378"/>
        <dbReference type="ChEBI" id="CHEBI:57783"/>
        <dbReference type="ChEBI" id="CHEBI:57955"/>
        <dbReference type="ChEBI" id="CHEBI:58349"/>
        <dbReference type="ChEBI" id="CHEBI:61548"/>
        <dbReference type="EC" id="1.1.1.49"/>
    </reaction>
</comment>
<comment type="pathway">
    <text evidence="3">Carbohydrate degradation; pentose phosphate pathway; D-ribulose 5-phosphate from D-glucose 6-phosphate (oxidative stage): step 1/3.</text>
</comment>
<comment type="similarity">
    <text evidence="3">Belongs to the glucose-6-phosphate dehydrogenase family.</text>
</comment>
<protein>
    <recommendedName>
        <fullName>Glucose-6-phosphate 1-dehydrogenase</fullName>
        <shortName>G6PD</shortName>
        <ecNumber evidence="2">1.1.1.49</ecNumber>
    </recommendedName>
</protein>
<keyword id="KW-0119">Carbohydrate metabolism</keyword>
<keyword id="KW-0313">Glucose metabolism</keyword>
<keyword id="KW-0521">NADP</keyword>
<keyword id="KW-0560">Oxidoreductase</keyword>
<keyword id="KW-1185">Reference proteome</keyword>
<dbReference type="EC" id="1.1.1.49" evidence="2"/>
<dbReference type="EMBL" id="X84001">
    <property type="protein sequence ID" value="CAA58825.1"/>
    <property type="molecule type" value="Genomic_DNA"/>
</dbReference>
<dbReference type="EMBL" id="X77830">
    <property type="protein sequence ID" value="CAA54841.1"/>
    <property type="molecule type" value="Genomic_DNA"/>
</dbReference>
<dbReference type="EMBL" id="AACD01000051">
    <property type="protein sequence ID" value="EAA63552.1"/>
    <property type="molecule type" value="Genomic_DNA"/>
</dbReference>
<dbReference type="EMBL" id="BN001306">
    <property type="protein sequence ID" value="CBF83624.1"/>
    <property type="molecule type" value="Genomic_DNA"/>
</dbReference>
<dbReference type="RefSeq" id="XP_660585.1">
    <property type="nucleotide sequence ID" value="XM_655493.1"/>
</dbReference>
<dbReference type="SMR" id="P41764"/>
<dbReference type="FunCoup" id="P41764">
    <property type="interactions" value="504"/>
</dbReference>
<dbReference type="STRING" id="227321.P41764"/>
<dbReference type="EnsemblFungi" id="CBF83624">
    <property type="protein sequence ID" value="CBF83624"/>
    <property type="gene ID" value="ANIA_02981"/>
</dbReference>
<dbReference type="KEGG" id="ani:ANIA_02981"/>
<dbReference type="VEuPathDB" id="FungiDB:AN2981"/>
<dbReference type="eggNOG" id="KOG0563">
    <property type="taxonomic scope" value="Eukaryota"/>
</dbReference>
<dbReference type="HOGENOM" id="CLU_013524_2_3_1"/>
<dbReference type="InParanoid" id="P41764"/>
<dbReference type="OMA" id="ERAGYYE"/>
<dbReference type="OrthoDB" id="60984at2759"/>
<dbReference type="UniPathway" id="UPA00115">
    <property type="reaction ID" value="UER00408"/>
</dbReference>
<dbReference type="Proteomes" id="UP000000560">
    <property type="component" value="Chromosome VI"/>
</dbReference>
<dbReference type="GO" id="GO:0005829">
    <property type="term" value="C:cytosol"/>
    <property type="evidence" value="ECO:0000318"/>
    <property type="project" value="GO_Central"/>
</dbReference>
<dbReference type="GO" id="GO:0004345">
    <property type="term" value="F:glucose-6-phosphate dehydrogenase activity"/>
    <property type="evidence" value="ECO:0000314"/>
    <property type="project" value="AspGD"/>
</dbReference>
<dbReference type="GO" id="GO:0050661">
    <property type="term" value="F:NADP binding"/>
    <property type="evidence" value="ECO:0007669"/>
    <property type="project" value="InterPro"/>
</dbReference>
<dbReference type="GO" id="GO:0006006">
    <property type="term" value="P:glucose metabolic process"/>
    <property type="evidence" value="ECO:0000318"/>
    <property type="project" value="GO_Central"/>
</dbReference>
<dbReference type="GO" id="GO:0009051">
    <property type="term" value="P:pentose-phosphate shunt, oxidative branch"/>
    <property type="evidence" value="ECO:0000318"/>
    <property type="project" value="GO_Central"/>
</dbReference>
<dbReference type="FunFam" id="3.30.360.10:FF:000015">
    <property type="entry name" value="Glucose-6-phosphate 1-dehydrogenase"/>
    <property type="match status" value="1"/>
</dbReference>
<dbReference type="FunFam" id="3.40.50.720:FF:000111">
    <property type="entry name" value="Glucose-6-phosphate 1-dehydrogenase"/>
    <property type="match status" value="1"/>
</dbReference>
<dbReference type="Gene3D" id="3.30.360.10">
    <property type="entry name" value="Dihydrodipicolinate Reductase, domain 2"/>
    <property type="match status" value="1"/>
</dbReference>
<dbReference type="Gene3D" id="3.40.50.720">
    <property type="entry name" value="NAD(P)-binding Rossmann-like Domain"/>
    <property type="match status" value="1"/>
</dbReference>
<dbReference type="HAMAP" id="MF_00966">
    <property type="entry name" value="G6PD"/>
    <property type="match status" value="1"/>
</dbReference>
<dbReference type="InterPro" id="IPR001282">
    <property type="entry name" value="G6P_DH"/>
</dbReference>
<dbReference type="InterPro" id="IPR019796">
    <property type="entry name" value="G6P_DH_AS"/>
</dbReference>
<dbReference type="InterPro" id="IPR022675">
    <property type="entry name" value="G6P_DH_C"/>
</dbReference>
<dbReference type="InterPro" id="IPR022674">
    <property type="entry name" value="G6P_DH_NAD-bd"/>
</dbReference>
<dbReference type="InterPro" id="IPR036291">
    <property type="entry name" value="NAD(P)-bd_dom_sf"/>
</dbReference>
<dbReference type="NCBIfam" id="TIGR00871">
    <property type="entry name" value="zwf"/>
    <property type="match status" value="1"/>
</dbReference>
<dbReference type="PANTHER" id="PTHR23429:SF0">
    <property type="entry name" value="GLUCOSE-6-PHOSPHATE 1-DEHYDROGENASE"/>
    <property type="match status" value="1"/>
</dbReference>
<dbReference type="PANTHER" id="PTHR23429">
    <property type="entry name" value="GLUCOSE-6-PHOSPHATE 1-DEHYDROGENASE G6PD"/>
    <property type="match status" value="1"/>
</dbReference>
<dbReference type="Pfam" id="PF02781">
    <property type="entry name" value="G6PD_C"/>
    <property type="match status" value="1"/>
</dbReference>
<dbReference type="Pfam" id="PF00479">
    <property type="entry name" value="G6PD_N"/>
    <property type="match status" value="1"/>
</dbReference>
<dbReference type="PIRSF" id="PIRSF000110">
    <property type="entry name" value="G6PD"/>
    <property type="match status" value="1"/>
</dbReference>
<dbReference type="PRINTS" id="PR00079">
    <property type="entry name" value="G6PDHDRGNASE"/>
</dbReference>
<dbReference type="SUPFAM" id="SSF55347">
    <property type="entry name" value="Glyceraldehyde-3-phosphate dehydrogenase-like, C-terminal domain"/>
    <property type="match status" value="1"/>
</dbReference>
<dbReference type="SUPFAM" id="SSF51735">
    <property type="entry name" value="NAD(P)-binding Rossmann-fold domains"/>
    <property type="match status" value="1"/>
</dbReference>
<dbReference type="PROSITE" id="PS00069">
    <property type="entry name" value="G6P_DEHYDROGENASE"/>
    <property type="match status" value="1"/>
</dbReference>
<organism>
    <name type="scientific">Emericella nidulans (strain FGSC A4 / ATCC 38163 / CBS 112.46 / NRRL 194 / M139)</name>
    <name type="common">Aspergillus nidulans</name>
    <dbReference type="NCBI Taxonomy" id="227321"/>
    <lineage>
        <taxon>Eukaryota</taxon>
        <taxon>Fungi</taxon>
        <taxon>Dikarya</taxon>
        <taxon>Ascomycota</taxon>
        <taxon>Pezizomycotina</taxon>
        <taxon>Eurotiomycetes</taxon>
        <taxon>Eurotiomycetidae</taxon>
        <taxon>Eurotiales</taxon>
        <taxon>Aspergillaceae</taxon>
        <taxon>Aspergillus</taxon>
        <taxon>Aspergillus subgen. Nidulantes</taxon>
    </lineage>
</organism>
<sequence length="511" mass="58977">MSATIARAEEQQNGSTVELKDDTVIVVLGASGDLAKKKTFPALFGLFRNKFLPKGIKIVGYARTQMDHNEYLKRVRSYIKTPTKEIEEQLNSFCELCTYISGQYDQDDSFKNLAKHLEEIEKNQKEQNRVFYMALPPSVFITVSEQLKRNCYPKNGVARIIVEKPFGKDLQSSRDLQKALEPNWKEEEIFRIDHYLGKEMVKNILIMRFGNEFFNATWNRHHIDNVQITFKEPFGTEGRGGYFDEFGIIRDVMQNHLLQVLTLLAMERPISFSAEDIRDEKVRVLRAMDPIQPKDVIIGQYGRSLDGSKPAYKEDDTVPQDSRCPTFCALVAHIKNERWDGVPFIMKAGKALNEQKTEIRIQFKDVTSGIFKDIPRNELVIRVQPNESVYIKMNSKLPGLSMQTVVTELDLTYRRRFSDLKIPEAYESLILDALKGDHSNFVRDDELDASWRMFTPLLHYLDDNKEIIPMEYPYGSRGPSVLDDFTASYGYKFSDAAGYQWPLTHTTPNRL</sequence>
<evidence type="ECO:0000250" key="1">
    <source>
        <dbReference type="UniProtKB" id="P11411"/>
    </source>
</evidence>
<evidence type="ECO:0000250" key="2">
    <source>
        <dbReference type="UniProtKB" id="P11413"/>
    </source>
</evidence>
<evidence type="ECO:0000305" key="3"/>
<feature type="chain" id="PRO_0000068103" description="Glucose-6-phosphate 1-dehydrogenase">
    <location>
        <begin position="1"/>
        <end position="511"/>
    </location>
</feature>
<feature type="active site" description="Proton acceptor" evidence="1">
    <location>
        <position position="256"/>
    </location>
</feature>
<feature type="binding site" evidence="2">
    <location>
        <begin position="29"/>
        <end position="36"/>
    </location>
    <ligand>
        <name>NADP(+)</name>
        <dbReference type="ChEBI" id="CHEBI:58349"/>
        <label>1</label>
    </ligand>
</feature>
<feature type="binding site" evidence="2">
    <location>
        <position position="63"/>
    </location>
    <ligand>
        <name>NADP(+)</name>
        <dbReference type="ChEBI" id="CHEBI:58349"/>
        <label>1</label>
    </ligand>
</feature>
<feature type="binding site" evidence="2">
    <location>
        <position position="164"/>
    </location>
    <ligand>
        <name>D-glucose 6-phosphate</name>
        <dbReference type="ChEBI" id="CHEBI:61548"/>
    </ligand>
</feature>
<feature type="binding site" evidence="2">
    <location>
        <position position="164"/>
    </location>
    <ligand>
        <name>NADP(+)</name>
        <dbReference type="ChEBI" id="CHEBI:58349"/>
        <label>1</label>
    </ligand>
</feature>
<feature type="binding site" evidence="2">
    <location>
        <begin position="194"/>
        <end position="198"/>
    </location>
    <ligand>
        <name>D-glucose 6-phosphate</name>
        <dbReference type="ChEBI" id="CHEBI:61548"/>
    </ligand>
</feature>
<feature type="binding site" evidence="2">
    <location>
        <position position="232"/>
    </location>
    <ligand>
        <name>D-glucose 6-phosphate</name>
        <dbReference type="ChEBI" id="CHEBI:61548"/>
    </ligand>
</feature>
<feature type="binding site" evidence="2">
    <location>
        <position position="251"/>
    </location>
    <ligand>
        <name>D-glucose 6-phosphate</name>
        <dbReference type="ChEBI" id="CHEBI:61548"/>
    </ligand>
</feature>
<feature type="binding site" evidence="2">
    <location>
        <position position="347"/>
    </location>
    <ligand>
        <name>NADP(+)</name>
        <dbReference type="ChEBI" id="CHEBI:58349"/>
        <label>2</label>
    </ligand>
</feature>
<feature type="binding site" evidence="2">
    <location>
        <position position="350"/>
    </location>
    <ligand>
        <name>D-glucose 6-phosphate</name>
        <dbReference type="ChEBI" id="CHEBI:61548"/>
    </ligand>
</feature>
<feature type="binding site" evidence="2">
    <location>
        <position position="356"/>
    </location>
    <ligand>
        <name>NADP(+)</name>
        <dbReference type="ChEBI" id="CHEBI:58349"/>
        <label>2</label>
    </ligand>
</feature>
<feature type="binding site" evidence="2">
    <location>
        <position position="360"/>
    </location>
    <ligand>
        <name>NADP(+)</name>
        <dbReference type="ChEBI" id="CHEBI:58349"/>
        <label>2</label>
    </ligand>
</feature>
<feature type="binding site" evidence="2">
    <location>
        <position position="382"/>
    </location>
    <ligand>
        <name>NADP(+)</name>
        <dbReference type="ChEBI" id="CHEBI:58349"/>
        <label>2</label>
    </ligand>
</feature>
<feature type="binding site" evidence="2">
    <location>
        <position position="384"/>
    </location>
    <ligand>
        <name>D-glucose 6-phosphate</name>
        <dbReference type="ChEBI" id="CHEBI:61548"/>
    </ligand>
</feature>
<feature type="binding site" evidence="2">
    <location>
        <begin position="390"/>
        <end position="392"/>
    </location>
    <ligand>
        <name>NADP(+)</name>
        <dbReference type="ChEBI" id="CHEBI:58349"/>
        <label>2</label>
    </ligand>
</feature>
<feature type="binding site" evidence="2">
    <location>
        <begin position="410"/>
        <end position="412"/>
    </location>
    <ligand>
        <name>NADP(+)</name>
        <dbReference type="ChEBI" id="CHEBI:58349"/>
        <label>2</label>
    </ligand>
</feature>
<feature type="binding site" evidence="2">
    <location>
        <position position="477"/>
    </location>
    <ligand>
        <name>NADP(+)</name>
        <dbReference type="ChEBI" id="CHEBI:58349"/>
        <label>2</label>
    </ligand>
</feature>
<feature type="sequence conflict" description="In Ref. 1; CAA58825." evidence="3" ref="1">
    <location>
        <begin position="15"/>
        <end position="20"/>
    </location>
</feature>
<feature type="sequence conflict" description="In Ref. 1; CAA58825." evidence="3" ref="1">
    <original>RSYIKTPTKE</original>
    <variation>DTLRPRQRK</variation>
    <location>
        <begin position="76"/>
        <end position="85"/>
    </location>
</feature>
<feature type="sequence conflict" description="In Ref. 1; CAA58825." evidence="3" ref="1">
    <original>L</original>
    <variation>LP</variation>
    <location>
        <position position="352"/>
    </location>
</feature>
<name>G6PD_EMENI</name>
<proteinExistence type="inferred from homology"/>